<reference key="1">
    <citation type="journal article" date="2001" name="Nature">
        <title>Complete genome sequence of a multiple drug resistant Salmonella enterica serovar Typhi CT18.</title>
        <authorList>
            <person name="Parkhill J."/>
            <person name="Dougan G."/>
            <person name="James K.D."/>
            <person name="Thomson N.R."/>
            <person name="Pickard D."/>
            <person name="Wain J."/>
            <person name="Churcher C.M."/>
            <person name="Mungall K.L."/>
            <person name="Bentley S.D."/>
            <person name="Holden M.T.G."/>
            <person name="Sebaihia M."/>
            <person name="Baker S."/>
            <person name="Basham D."/>
            <person name="Brooks K."/>
            <person name="Chillingworth T."/>
            <person name="Connerton P."/>
            <person name="Cronin A."/>
            <person name="Davis P."/>
            <person name="Davies R.M."/>
            <person name="Dowd L."/>
            <person name="White N."/>
            <person name="Farrar J."/>
            <person name="Feltwell T."/>
            <person name="Hamlin N."/>
            <person name="Haque A."/>
            <person name="Hien T.T."/>
            <person name="Holroyd S."/>
            <person name="Jagels K."/>
            <person name="Krogh A."/>
            <person name="Larsen T.S."/>
            <person name="Leather S."/>
            <person name="Moule S."/>
            <person name="O'Gaora P."/>
            <person name="Parry C."/>
            <person name="Quail M.A."/>
            <person name="Rutherford K.M."/>
            <person name="Simmonds M."/>
            <person name="Skelton J."/>
            <person name="Stevens K."/>
            <person name="Whitehead S."/>
            <person name="Barrell B.G."/>
        </authorList>
    </citation>
    <scope>NUCLEOTIDE SEQUENCE [LARGE SCALE GENOMIC DNA]</scope>
    <source>
        <strain>CT18</strain>
    </source>
</reference>
<reference key="2">
    <citation type="journal article" date="2003" name="J. Bacteriol.">
        <title>Comparative genomics of Salmonella enterica serovar Typhi strains Ty2 and CT18.</title>
        <authorList>
            <person name="Deng W."/>
            <person name="Liou S.-R."/>
            <person name="Plunkett G. III"/>
            <person name="Mayhew G.F."/>
            <person name="Rose D.J."/>
            <person name="Burland V."/>
            <person name="Kodoyianni V."/>
            <person name="Schwartz D.C."/>
            <person name="Blattner F.R."/>
        </authorList>
    </citation>
    <scope>NUCLEOTIDE SEQUENCE [LARGE SCALE GENOMIC DNA]</scope>
    <source>
        <strain>ATCC 700931 / Ty2</strain>
    </source>
</reference>
<organism>
    <name type="scientific">Salmonella typhi</name>
    <dbReference type="NCBI Taxonomy" id="90370"/>
    <lineage>
        <taxon>Bacteria</taxon>
        <taxon>Pseudomonadati</taxon>
        <taxon>Pseudomonadota</taxon>
        <taxon>Gammaproteobacteria</taxon>
        <taxon>Enterobacterales</taxon>
        <taxon>Enterobacteriaceae</taxon>
        <taxon>Salmonella</taxon>
    </lineage>
</organism>
<evidence type="ECO:0000250" key="1"/>
<evidence type="ECO:0000255" key="2">
    <source>
        <dbReference type="PROSITE-ProRule" id="PRU00393"/>
    </source>
</evidence>
<evidence type="ECO:0000255" key="3">
    <source>
        <dbReference type="PROSITE-ProRule" id="PRU00394"/>
    </source>
</evidence>
<evidence type="ECO:0000256" key="4">
    <source>
        <dbReference type="SAM" id="MobiDB-lite"/>
    </source>
</evidence>
<feature type="chain" id="PRO_0000313704" description="HTH-type transcriptional repressor AllR">
    <location>
        <begin position="1"/>
        <end position="272"/>
    </location>
</feature>
<feature type="domain" description="HTH iclR-type" evidence="2">
    <location>
        <begin position="21"/>
        <end position="83"/>
    </location>
</feature>
<feature type="domain" description="IclR-ED" evidence="3">
    <location>
        <begin position="98"/>
        <end position="267"/>
    </location>
</feature>
<feature type="DNA-binding region" description="H-T-H motif" evidence="2">
    <location>
        <begin position="43"/>
        <end position="62"/>
    </location>
</feature>
<feature type="region of interest" description="Disordered" evidence="4">
    <location>
        <begin position="1"/>
        <end position="20"/>
    </location>
</feature>
<feature type="binding site" evidence="1">
    <location>
        <begin position="154"/>
        <end position="156"/>
    </location>
    <ligand>
        <name>glyoxylate</name>
        <dbReference type="ChEBI" id="CHEBI:36655"/>
    </ligand>
</feature>
<feature type="binding site" evidence="1">
    <location>
        <position position="207"/>
    </location>
    <ligand>
        <name>glyoxylate</name>
        <dbReference type="ChEBI" id="CHEBI:36655"/>
    </ligand>
</feature>
<feature type="binding site" evidence="1">
    <location>
        <position position="217"/>
    </location>
    <ligand>
        <name>glyoxylate</name>
        <dbReference type="ChEBI" id="CHEBI:36655"/>
    </ligand>
</feature>
<feature type="binding site" evidence="1">
    <location>
        <begin position="234"/>
        <end position="236"/>
    </location>
    <ligand>
        <name>glyoxylate</name>
        <dbReference type="ChEBI" id="CHEBI:36655"/>
    </ligand>
</feature>
<accession>Q8Z8R2</accession>
<accession>Q7C8C8</accession>
<proteinExistence type="inferred from homology"/>
<gene>
    <name type="primary">allR</name>
    <name type="synonym">glxA3</name>
    <name type="ordered locus">STY0564</name>
    <name type="ordered locus">t2344</name>
</gene>
<keyword id="KW-0238">DNA-binding</keyword>
<keyword id="KW-0678">Repressor</keyword>
<keyword id="KW-0804">Transcription</keyword>
<keyword id="KW-0805">Transcription regulation</keyword>
<sequence>MTEVRRRGRPGQAEPTAQKGAQALERGIAILQYLERSGGSSSVSDISGSLDLPLSTTFRLLKVLQAADFVYQDSQLGWWHIGLGVFNVGSAYIHNRDVLSVAGPFMHRLMLLSGETVNVAIRNGNEAVLIGQKECKSMVRMCAPLGSRLPLHASGAGKALLYPLTEEELVGIVVNTGLRRFTPTTLVDLPILLKNLERAREQGYTVDQEEHVVGLNCIASAIYDDAGSVVAAISISGPASRLTEDRFISQGELVRDTAKDISTALGLKPPVA</sequence>
<name>ALLR_SALTI</name>
<comment type="function">
    <text evidence="1">Negative regulator of allantoin and glyoxylate utilization operons. Binds to the gcl promoter and to the allS-allA intergenic region (By similarity).</text>
</comment>
<dbReference type="EMBL" id="AE014613">
    <property type="protein sequence ID" value="AAO69937.1"/>
    <property type="molecule type" value="Genomic_DNA"/>
</dbReference>
<dbReference type="EMBL" id="AL513382">
    <property type="protein sequence ID" value="CAD05001.1"/>
    <property type="molecule type" value="Genomic_DNA"/>
</dbReference>
<dbReference type="RefSeq" id="NP_455110.1">
    <property type="nucleotide sequence ID" value="NC_003198.1"/>
</dbReference>
<dbReference type="RefSeq" id="WP_000141266.1">
    <property type="nucleotide sequence ID" value="NZ_WSUR01000008.1"/>
</dbReference>
<dbReference type="SMR" id="Q8Z8R2"/>
<dbReference type="STRING" id="220341.gene:17584581"/>
<dbReference type="KEGG" id="stt:t2344"/>
<dbReference type="KEGG" id="sty:STY0564"/>
<dbReference type="PATRIC" id="fig|220341.7.peg.566"/>
<dbReference type="eggNOG" id="COG1414">
    <property type="taxonomic scope" value="Bacteria"/>
</dbReference>
<dbReference type="HOGENOM" id="CLU_062618_7_1_6"/>
<dbReference type="OMA" id="EHMDGLR"/>
<dbReference type="OrthoDB" id="9807558at2"/>
<dbReference type="Proteomes" id="UP000000541">
    <property type="component" value="Chromosome"/>
</dbReference>
<dbReference type="Proteomes" id="UP000002670">
    <property type="component" value="Chromosome"/>
</dbReference>
<dbReference type="GO" id="GO:0003677">
    <property type="term" value="F:DNA binding"/>
    <property type="evidence" value="ECO:0007669"/>
    <property type="project" value="UniProtKB-KW"/>
</dbReference>
<dbReference type="GO" id="GO:0003700">
    <property type="term" value="F:DNA-binding transcription factor activity"/>
    <property type="evidence" value="ECO:0007669"/>
    <property type="project" value="TreeGrafter"/>
</dbReference>
<dbReference type="GO" id="GO:0045892">
    <property type="term" value="P:negative regulation of DNA-templated transcription"/>
    <property type="evidence" value="ECO:0007669"/>
    <property type="project" value="TreeGrafter"/>
</dbReference>
<dbReference type="FunFam" id="3.30.450.40:FF:000017">
    <property type="entry name" value="HTH-type transcriptional repressor AllR"/>
    <property type="match status" value="1"/>
</dbReference>
<dbReference type="Gene3D" id="3.30.450.40">
    <property type="match status" value="1"/>
</dbReference>
<dbReference type="Gene3D" id="1.10.10.10">
    <property type="entry name" value="Winged helix-like DNA-binding domain superfamily/Winged helix DNA-binding domain"/>
    <property type="match status" value="1"/>
</dbReference>
<dbReference type="InterPro" id="IPR029016">
    <property type="entry name" value="GAF-like_dom_sf"/>
</dbReference>
<dbReference type="InterPro" id="IPR050707">
    <property type="entry name" value="HTH_MetabolicPath_Reg"/>
</dbReference>
<dbReference type="InterPro" id="IPR014757">
    <property type="entry name" value="Tscrpt_reg_IclR_C"/>
</dbReference>
<dbReference type="InterPro" id="IPR005471">
    <property type="entry name" value="Tscrpt_reg_IclR_N"/>
</dbReference>
<dbReference type="InterPro" id="IPR036388">
    <property type="entry name" value="WH-like_DNA-bd_sf"/>
</dbReference>
<dbReference type="InterPro" id="IPR036390">
    <property type="entry name" value="WH_DNA-bd_sf"/>
</dbReference>
<dbReference type="NCBIfam" id="NF007548">
    <property type="entry name" value="PRK10163.1"/>
    <property type="match status" value="1"/>
</dbReference>
<dbReference type="PANTHER" id="PTHR30136">
    <property type="entry name" value="HELIX-TURN-HELIX TRANSCRIPTIONAL REGULATOR, ICLR FAMILY"/>
    <property type="match status" value="1"/>
</dbReference>
<dbReference type="PANTHER" id="PTHR30136:SF24">
    <property type="entry name" value="HTH-TYPE TRANSCRIPTIONAL REPRESSOR ALLR"/>
    <property type="match status" value="1"/>
</dbReference>
<dbReference type="Pfam" id="PF09339">
    <property type="entry name" value="HTH_IclR"/>
    <property type="match status" value="1"/>
</dbReference>
<dbReference type="Pfam" id="PF01614">
    <property type="entry name" value="IclR_C"/>
    <property type="match status" value="1"/>
</dbReference>
<dbReference type="SMART" id="SM00346">
    <property type="entry name" value="HTH_ICLR"/>
    <property type="match status" value="1"/>
</dbReference>
<dbReference type="SUPFAM" id="SSF55781">
    <property type="entry name" value="GAF domain-like"/>
    <property type="match status" value="1"/>
</dbReference>
<dbReference type="SUPFAM" id="SSF46785">
    <property type="entry name" value="Winged helix' DNA-binding domain"/>
    <property type="match status" value="1"/>
</dbReference>
<dbReference type="PROSITE" id="PS51077">
    <property type="entry name" value="HTH_ICLR"/>
    <property type="match status" value="1"/>
</dbReference>
<dbReference type="PROSITE" id="PS51078">
    <property type="entry name" value="ICLR_ED"/>
    <property type="match status" value="1"/>
</dbReference>
<protein>
    <recommendedName>
        <fullName>HTH-type transcriptional repressor AllR</fullName>
    </recommendedName>
    <alternativeName>
        <fullName>Negative regulator of allantoin and glyoxylate utilization operons</fullName>
    </alternativeName>
</protein>